<accession>P06279</accession>
<accession>Q45519</accession>
<sequence length="549" mass="62671">MLTFHRIIRKGWMFLLAFLLTALLFCPTGQPAKAAAPFNGTMMQYFEWYLPDDGTLWTKVANEANNLSSLGITALWLPPAYKGTSRSDVGYGVYDLYDLGEFNQKGAVRTKYGTKAQYLQAIQAAHAAGMQVYADVVFDHKGGADGTEWVDAVEVNPSDRNQEISGTYQIQAWTKFDFPGRGNTYSSFKWRWYHFDGVDWDESRKLSRIYKFRGIGKAWDWEVDTENGNYDYLMYADLDMDHPEVVTELKSWGKWYVNTTNIDGFRLDAVKHIKFSFFPDWLSDVRSQTGKPLFTVGEYWSYDINKLHNYIMKTNGTMSLFDAPLHNKFYTASKSGGTFDMRTLMTNTLMKDQPTLAVTFVDNHDTEPGQALQSWVDPWFKPLAYAFILTRQEGYPCVFYGDYYGIPQYNIPSLKSKIDPLLIARRDYAYGTQHDYLDHSDIIGWTREGVTEKPGSGLAALITDGPGGSKWMYVGKQHAGKVFYDLTGNRSDTVTINSDGWGEFKVNGGSVSVWVPRKTTVSTIAWSITTRPWTDEFVRWTEPRLVAWP</sequence>
<proteinExistence type="evidence at protein level"/>
<gene>
    <name type="primary">amyS</name>
</gene>
<comment type="catalytic activity">
    <reaction evidence="3">
        <text>Endohydrolysis of (1-&gt;4)-alpha-D-glucosidic linkages in polysaccharides containing three or more (1-&gt;4)-alpha-linked D-glucose units.</text>
        <dbReference type="EC" id="3.2.1.1"/>
    </reaction>
</comment>
<comment type="cofactor">
    <cofactor evidence="2">
        <name>Ca(2+)</name>
        <dbReference type="ChEBI" id="CHEBI:29108"/>
    </cofactor>
    <text evidence="2">Binds 3 Ca(2+) ions per subunit.</text>
</comment>
<comment type="cofactor">
    <cofactor evidence="2">
        <name>Na(+)</name>
        <dbReference type="ChEBI" id="CHEBI:29101"/>
    </cofactor>
    <text evidence="2">Binds 1 sodium ion per subunit.</text>
</comment>
<comment type="subunit">
    <text>Monomer.</text>
</comment>
<comment type="subcellular location">
    <subcellularLocation>
        <location evidence="3 5">Secreted</location>
    </subcellularLocation>
</comment>
<comment type="similarity">
    <text evidence="6">Belongs to the glycosyl hydrolase 13 family.</text>
</comment>
<keyword id="KW-0002">3D-structure</keyword>
<keyword id="KW-0106">Calcium</keyword>
<keyword id="KW-0119">Carbohydrate metabolism</keyword>
<keyword id="KW-0903">Direct protein sequencing</keyword>
<keyword id="KW-0326">Glycosidase</keyword>
<keyword id="KW-0378">Hydrolase</keyword>
<keyword id="KW-0479">Metal-binding</keyword>
<keyword id="KW-0964">Secreted</keyword>
<keyword id="KW-0732">Signal</keyword>
<dbReference type="EC" id="3.2.1.1" evidence="3"/>
<dbReference type="EMBL" id="M11450">
    <property type="protein sequence ID" value="AAA22235.2"/>
    <property type="molecule type" value="Genomic_DNA"/>
</dbReference>
<dbReference type="EMBL" id="X02769">
    <property type="protein sequence ID" value="CAA26547.1"/>
    <property type="molecule type" value="Genomic_DNA"/>
</dbReference>
<dbReference type="EMBL" id="M13255">
    <property type="protein sequence ID" value="AAA22241.1"/>
    <property type="molecule type" value="Genomic_DNA"/>
</dbReference>
<dbReference type="EMBL" id="M57457">
    <property type="protein sequence ID" value="AAA22227.1"/>
    <property type="molecule type" value="Genomic_DNA"/>
</dbReference>
<dbReference type="PIR" id="A24436">
    <property type="entry name" value="A24436"/>
</dbReference>
<dbReference type="PIR" id="A91999">
    <property type="entry name" value="ALBSF"/>
</dbReference>
<dbReference type="PDB" id="1HVX">
    <property type="method" value="X-ray"/>
    <property type="resolution" value="2.00 A"/>
    <property type="chains" value="A=35-549"/>
</dbReference>
<dbReference type="PDB" id="4UZU">
    <property type="method" value="X-ray"/>
    <property type="resolution" value="1.90 A"/>
    <property type="chains" value="A=35-549"/>
</dbReference>
<dbReference type="PDBsum" id="1HVX"/>
<dbReference type="PDBsum" id="4UZU"/>
<dbReference type="SMR" id="P06279"/>
<dbReference type="ChEMBL" id="CHEMBL5371"/>
<dbReference type="CAZy" id="GH13">
    <property type="family name" value="Glycoside Hydrolase Family 13"/>
</dbReference>
<dbReference type="BRENDA" id="3.2.1.1">
    <property type="organism ID" value="623"/>
</dbReference>
<dbReference type="EvolutionaryTrace" id="P06279"/>
<dbReference type="GO" id="GO:0005576">
    <property type="term" value="C:extracellular region"/>
    <property type="evidence" value="ECO:0007669"/>
    <property type="project" value="UniProtKB-SubCell"/>
</dbReference>
<dbReference type="GO" id="GO:0004556">
    <property type="term" value="F:alpha-amylase activity"/>
    <property type="evidence" value="ECO:0007669"/>
    <property type="project" value="UniProtKB-EC"/>
</dbReference>
<dbReference type="GO" id="GO:0005509">
    <property type="term" value="F:calcium ion binding"/>
    <property type="evidence" value="ECO:0007669"/>
    <property type="project" value="InterPro"/>
</dbReference>
<dbReference type="GO" id="GO:0005975">
    <property type="term" value="P:carbohydrate metabolic process"/>
    <property type="evidence" value="ECO:0007669"/>
    <property type="project" value="InterPro"/>
</dbReference>
<dbReference type="CDD" id="cd11318">
    <property type="entry name" value="AmyAc_bac_fung_AmyA"/>
    <property type="match status" value="1"/>
</dbReference>
<dbReference type="FunFam" id="2.40.30.140:FF:000002">
    <property type="entry name" value="Alpha-amylase"/>
    <property type="match status" value="1"/>
</dbReference>
<dbReference type="Gene3D" id="2.40.30.140">
    <property type="match status" value="1"/>
</dbReference>
<dbReference type="Gene3D" id="3.20.20.80">
    <property type="entry name" value="Glycosidases"/>
    <property type="match status" value="1"/>
</dbReference>
<dbReference type="Gene3D" id="2.60.40.1180">
    <property type="entry name" value="Golgi alpha-mannosidase II"/>
    <property type="match status" value="1"/>
</dbReference>
<dbReference type="InterPro" id="IPR013776">
    <property type="entry name" value="A-amylase_thermo"/>
</dbReference>
<dbReference type="InterPro" id="IPR015237">
    <property type="entry name" value="Alpha-amylase_C_pro"/>
</dbReference>
<dbReference type="InterPro" id="IPR006047">
    <property type="entry name" value="Glyco_hydro_13_cat_dom"/>
</dbReference>
<dbReference type="InterPro" id="IPR013780">
    <property type="entry name" value="Glyco_hydro_b"/>
</dbReference>
<dbReference type="InterPro" id="IPR017853">
    <property type="entry name" value="Glycoside_hydrolase_SF"/>
</dbReference>
<dbReference type="NCBIfam" id="NF006968">
    <property type="entry name" value="PRK09441.1-1"/>
    <property type="match status" value="1"/>
</dbReference>
<dbReference type="NCBIfam" id="NF006969">
    <property type="entry name" value="PRK09441.1-2"/>
    <property type="match status" value="1"/>
</dbReference>
<dbReference type="NCBIfam" id="NF006972">
    <property type="entry name" value="PRK09441.1-5"/>
    <property type="match status" value="1"/>
</dbReference>
<dbReference type="PANTHER" id="PTHR43447">
    <property type="entry name" value="ALPHA-AMYLASE"/>
    <property type="match status" value="1"/>
</dbReference>
<dbReference type="Pfam" id="PF09154">
    <property type="entry name" value="Alpha-amy_C_pro"/>
    <property type="match status" value="1"/>
</dbReference>
<dbReference type="Pfam" id="PF00128">
    <property type="entry name" value="Alpha-amylase"/>
    <property type="match status" value="1"/>
</dbReference>
<dbReference type="PIRSF" id="PIRSF001021">
    <property type="entry name" value="Alph-amls_thrmst"/>
    <property type="match status" value="1"/>
</dbReference>
<dbReference type="SMART" id="SM00642">
    <property type="entry name" value="Aamy"/>
    <property type="match status" value="1"/>
</dbReference>
<dbReference type="SUPFAM" id="SSF51445">
    <property type="entry name" value="(Trans)glycosidases"/>
    <property type="match status" value="1"/>
</dbReference>
<dbReference type="SUPFAM" id="SSF51011">
    <property type="entry name" value="Glycosyl hydrolase domain"/>
    <property type="match status" value="1"/>
</dbReference>
<organism>
    <name type="scientific">Geobacillus stearothermophilus</name>
    <name type="common">Bacillus stearothermophilus</name>
    <dbReference type="NCBI Taxonomy" id="1422"/>
    <lineage>
        <taxon>Bacteria</taxon>
        <taxon>Bacillati</taxon>
        <taxon>Bacillota</taxon>
        <taxon>Bacilli</taxon>
        <taxon>Bacillales</taxon>
        <taxon>Anoxybacillaceae</taxon>
        <taxon>Geobacillus</taxon>
    </lineage>
</organism>
<feature type="signal peptide" evidence="3 4">
    <location>
        <begin position="1"/>
        <end position="34"/>
    </location>
</feature>
<feature type="chain" id="PRO_0000001334" description="Alpha-amylase">
    <location>
        <begin position="35"/>
        <end position="549"/>
    </location>
</feature>
<feature type="active site" description="Nucleophile">
    <location>
        <position position="268"/>
    </location>
</feature>
<feature type="active site" description="Proton donor">
    <location>
        <position position="298"/>
    </location>
</feature>
<feature type="binding site" evidence="2 7">
    <location>
        <position position="139"/>
    </location>
    <ligand>
        <name>Ca(2+)</name>
        <dbReference type="ChEBI" id="CHEBI:29108"/>
        <label>1</label>
    </ligand>
</feature>
<feature type="binding site" evidence="2 7">
    <location>
        <position position="196"/>
    </location>
    <ligand>
        <name>Ca(2+)</name>
        <dbReference type="ChEBI" id="CHEBI:29108"/>
        <label>2</label>
    </ligand>
</feature>
<feature type="binding site" evidence="2 7">
    <location>
        <position position="196"/>
    </location>
    <ligand>
        <name>Na(+)</name>
        <dbReference type="ChEBI" id="CHEBI:29101"/>
    </ligand>
</feature>
<feature type="binding site" evidence="2 7">
    <location>
        <position position="218"/>
    </location>
    <ligand>
        <name>Ca(2+)</name>
        <dbReference type="ChEBI" id="CHEBI:29108"/>
        <label>2</label>
    </ligand>
</feature>
<feature type="binding site" evidence="2 7">
    <location>
        <position position="220"/>
    </location>
    <ligand>
        <name>Ca(2+)</name>
        <dbReference type="ChEBI" id="CHEBI:29108"/>
        <label>2</label>
    </ligand>
</feature>
<feature type="binding site" evidence="2 7">
    <location>
        <position position="220"/>
    </location>
    <ligand>
        <name>Na(+)</name>
        <dbReference type="ChEBI" id="CHEBI:29101"/>
    </ligand>
</feature>
<feature type="binding site" evidence="2 7">
    <location>
        <position position="231"/>
    </location>
    <ligand>
        <name>Ca(2+)</name>
        <dbReference type="ChEBI" id="CHEBI:29108"/>
        <label>1</label>
    </ligand>
</feature>
<feature type="binding site" evidence="2 7">
    <location>
        <position position="231"/>
    </location>
    <ligand>
        <name>Na(+)</name>
        <dbReference type="ChEBI" id="CHEBI:29101"/>
    </ligand>
</feature>
<feature type="binding site" evidence="2 7">
    <location>
        <position position="237"/>
    </location>
    <ligand>
        <name>Ca(2+)</name>
        <dbReference type="ChEBI" id="CHEBI:29108"/>
        <label>1</label>
    </ligand>
</feature>
<feature type="binding site" evidence="2 7">
    <location>
        <position position="237"/>
    </location>
    <ligand>
        <name>Na(+)</name>
        <dbReference type="ChEBI" id="CHEBI:29101"/>
    </ligand>
</feature>
<feature type="binding site" evidence="2 7">
    <location>
        <position position="238"/>
    </location>
    <ligand>
        <name>Na(+)</name>
        <dbReference type="ChEBI" id="CHEBI:29101"/>
    </ligand>
</feature>
<feature type="binding site" evidence="2 7">
    <location>
        <position position="239"/>
    </location>
    <ligand>
        <name>Ca(2+)</name>
        <dbReference type="ChEBI" id="CHEBI:29108"/>
        <label>2</label>
    </ligand>
</feature>
<feature type="binding site" evidence="2 7">
    <location>
        <position position="272"/>
    </location>
    <ligand>
        <name>Ca(2+)</name>
        <dbReference type="ChEBI" id="CHEBI:29108"/>
        <label>1</label>
    </ligand>
</feature>
<feature type="binding site" evidence="2 7">
    <location>
        <position position="337"/>
    </location>
    <ligand>
        <name>Ca(2+)</name>
        <dbReference type="ChEBI" id="CHEBI:29108"/>
        <label>3</label>
    </ligand>
</feature>
<feature type="binding site" evidence="2 7">
    <location>
        <position position="339"/>
    </location>
    <ligand>
        <name>Ca(2+)</name>
        <dbReference type="ChEBI" id="CHEBI:29108"/>
        <label>3</label>
    </ligand>
</feature>
<feature type="binding site" evidence="2 7">
    <location>
        <position position="440"/>
    </location>
    <ligand>
        <name>Ca(2+)</name>
        <dbReference type="ChEBI" id="CHEBI:29108"/>
        <label>3</label>
    </ligand>
</feature>
<feature type="binding site" evidence="2 7">
    <location>
        <position position="441"/>
    </location>
    <ligand>
        <name>Ca(2+)</name>
        <dbReference type="ChEBI" id="CHEBI:29108"/>
        <label>3</label>
    </ligand>
</feature>
<feature type="binding site" evidence="2 7">
    <location>
        <position position="464"/>
    </location>
    <ligand>
        <name>Ca(2+)</name>
        <dbReference type="ChEBI" id="CHEBI:29108"/>
        <label>3</label>
    </ligand>
</feature>
<feature type="site" description="Transition state stabilizer" evidence="1">
    <location>
        <position position="365"/>
    </location>
</feature>
<feature type="sequence conflict" description="In Ref. 3; AAA22241." evidence="6" ref="3">
    <original>M</original>
    <variation>V</variation>
    <location>
        <position position="13"/>
    </location>
</feature>
<feature type="sequence conflict" description="In Ref. 3; AAA22241." evidence="6" ref="3">
    <original>L</original>
    <variation>W</variation>
    <location>
        <position position="19"/>
    </location>
</feature>
<feature type="sequence conflict" description="In Ref. 2; CAA26547 and 3; AAA22241." evidence="6" ref="2 3">
    <original>L</original>
    <variation>S</variation>
    <location>
        <position position="23"/>
    </location>
</feature>
<feature type="sequence conflict" description="In Ref. 2; CAA26547 and 5; no nucleotide entry." evidence="6" ref="2 5">
    <original>P</original>
    <variation>H</variation>
    <location>
        <position position="31"/>
    </location>
</feature>
<feature type="sequence conflict" description="In Ref. 2; CAA26547 and 3; AAA22241." evidence="6" ref="2 3">
    <original>A</original>
    <variation>T</variation>
    <location>
        <position position="107"/>
    </location>
</feature>
<feature type="sequence conflict" description="In Ref. 4; AAA22227." evidence="6" ref="4">
    <original>T</original>
    <variation>I</variation>
    <location>
        <position position="167"/>
    </location>
</feature>
<feature type="sequence conflict" description="In Ref. 3; AAA22241." evidence="6" ref="3">
    <original>P</original>
    <variation>N</variation>
    <location>
        <position position="179"/>
    </location>
</feature>
<feature type="sequence conflict" description="In Ref. 2; CAA26547 and 3; AAA22241." evidence="6" ref="2 3">
    <original>S</original>
    <variation>N</variation>
    <location>
        <position position="251"/>
    </location>
</feature>
<feature type="sequence conflict" description="In Ref. 4; AAA22227." evidence="6" ref="4">
    <original>TNI</original>
    <variation>RTL</variation>
    <location>
        <begin position="260"/>
        <end position="262"/>
    </location>
</feature>
<feature type="sequence conflict" description="In Ref. 2; CAA26547, 3; AAA22241 and 4; AAA22227." evidence="6" ref="2 3 4">
    <original>D</original>
    <variation>Y</variation>
    <location>
        <position position="284"/>
    </location>
</feature>
<feature type="sequence conflict" description="In Ref. 2; CAA26547 and 3; AAA22241." evidence="6" ref="2 3">
    <original>M</original>
    <variation>T</variation>
    <location>
        <position position="312"/>
    </location>
</feature>
<feature type="sequence conflict" description="In Ref. 2; CAA26547 and 3; AAA22241." evidence="6" ref="2 3">
    <original>T</original>
    <variation>A</variation>
    <location>
        <position position="338"/>
    </location>
</feature>
<feature type="sequence conflict" description="In Ref. 3; AAA22241." evidence="6" ref="3">
    <original>R</original>
    <variation>S</variation>
    <location>
        <position position="342"/>
    </location>
</feature>
<feature type="sequence conflict" description="In Ref. 3; AAA22241." evidence="6" ref="3">
    <original>T</original>
    <variation>N</variation>
    <location>
        <position position="346"/>
    </location>
</feature>
<feature type="sequence conflict" description="In Ref. 2; CAA26547." evidence="6" ref="2">
    <original>V</original>
    <variation>C</variation>
    <location>
        <position position="376"/>
    </location>
</feature>
<feature type="sequence conflict" description="In Ref. 2; CAA26547." evidence="6" ref="2">
    <original>WS</original>
    <variation>RP</variation>
    <location>
        <begin position="526"/>
        <end position="527"/>
    </location>
</feature>
<feature type="sequence conflict" description="In Ref. 3; AAA22241." evidence="6" ref="3">
    <original>S</original>
    <variation>P</variation>
    <location>
        <position position="527"/>
    </location>
</feature>
<feature type="sequence conflict" description="In Ref. 2; CAA26547 and 3; AAA22241." evidence="6" ref="2 3">
    <original>D</original>
    <variation>G</variation>
    <location>
        <position position="535"/>
    </location>
</feature>
<feature type="strand" evidence="8">
    <location>
        <begin position="42"/>
        <end position="44"/>
    </location>
</feature>
<feature type="strand" evidence="8">
    <location>
        <begin position="52"/>
        <end position="54"/>
    </location>
</feature>
<feature type="helix" evidence="8">
    <location>
        <begin position="56"/>
        <end position="69"/>
    </location>
</feature>
<feature type="strand" evidence="8">
    <location>
        <begin position="74"/>
        <end position="77"/>
    </location>
</feature>
<feature type="strand" evidence="8">
    <location>
        <begin position="81"/>
        <end position="85"/>
    </location>
</feature>
<feature type="strand" evidence="8">
    <location>
        <begin position="90"/>
        <end position="95"/>
    </location>
</feature>
<feature type="strand" evidence="8">
    <location>
        <begin position="107"/>
        <end position="110"/>
    </location>
</feature>
<feature type="helix" evidence="8">
    <location>
        <begin position="115"/>
        <end position="127"/>
    </location>
</feature>
<feature type="strand" evidence="8">
    <location>
        <begin position="131"/>
        <end position="136"/>
    </location>
</feature>
<feature type="strand" evidence="8">
    <location>
        <begin position="139"/>
        <end position="141"/>
    </location>
</feature>
<feature type="strand" evidence="8">
    <location>
        <begin position="145"/>
        <end position="156"/>
    </location>
</feature>
<feature type="strand" evidence="8">
    <location>
        <begin position="159"/>
        <end position="163"/>
    </location>
</feature>
<feature type="strand" evidence="8">
    <location>
        <begin position="168"/>
        <end position="176"/>
    </location>
</feature>
<feature type="turn" evidence="8">
    <location>
        <begin position="179"/>
        <end position="183"/>
    </location>
</feature>
<feature type="helix" evidence="8">
    <location>
        <begin position="192"/>
        <end position="194"/>
    </location>
</feature>
<feature type="strand" evidence="8">
    <location>
        <begin position="195"/>
        <end position="201"/>
    </location>
</feature>
<feature type="turn" evidence="8">
    <location>
        <begin position="202"/>
        <end position="205"/>
    </location>
</feature>
<feature type="strand" evidence="8">
    <location>
        <begin position="206"/>
        <end position="212"/>
    </location>
</feature>
<feature type="strand" evidence="8">
    <location>
        <begin position="234"/>
        <end position="238"/>
    </location>
</feature>
<feature type="helix" evidence="8">
    <location>
        <begin position="243"/>
        <end position="260"/>
    </location>
</feature>
<feature type="strand" evidence="8">
    <location>
        <begin position="264"/>
        <end position="267"/>
    </location>
</feature>
<feature type="helix" evidence="8">
    <location>
        <begin position="270"/>
        <end position="272"/>
    </location>
</feature>
<feature type="helix" evidence="8">
    <location>
        <begin position="277"/>
        <end position="289"/>
    </location>
</feature>
<feature type="strand" evidence="8">
    <location>
        <begin position="294"/>
        <end position="297"/>
    </location>
</feature>
<feature type="helix" evidence="8">
    <location>
        <begin position="304"/>
        <end position="313"/>
    </location>
</feature>
<feature type="turn" evidence="8">
    <location>
        <begin position="314"/>
        <end position="316"/>
    </location>
</feature>
<feature type="strand" evidence="8">
    <location>
        <begin position="318"/>
        <end position="321"/>
    </location>
</feature>
<feature type="helix" evidence="8">
    <location>
        <begin position="323"/>
        <end position="333"/>
    </location>
</feature>
<feature type="turn" evidence="8">
    <location>
        <begin position="334"/>
        <end position="337"/>
    </location>
</feature>
<feature type="helix" evidence="8">
    <location>
        <begin position="341"/>
        <end position="343"/>
    </location>
</feature>
<feature type="turn" evidence="8">
    <location>
        <begin position="344"/>
        <end position="347"/>
    </location>
</feature>
<feature type="helix" evidence="8">
    <location>
        <begin position="349"/>
        <end position="352"/>
    </location>
</feature>
<feature type="helix" evidence="8">
    <location>
        <begin position="354"/>
        <end position="356"/>
    </location>
</feature>
<feature type="strand" evidence="8">
    <location>
        <begin position="357"/>
        <end position="361"/>
    </location>
</feature>
<feature type="turn" evidence="8">
    <location>
        <begin position="364"/>
        <end position="366"/>
    </location>
</feature>
<feature type="turn" evidence="8">
    <location>
        <begin position="378"/>
        <end position="380"/>
    </location>
</feature>
<feature type="helix" evidence="8">
    <location>
        <begin position="381"/>
        <end position="390"/>
    </location>
</feature>
<feature type="strand" evidence="8">
    <location>
        <begin position="391"/>
        <end position="399"/>
    </location>
</feature>
<feature type="helix" evidence="8">
    <location>
        <begin position="400"/>
        <end position="404"/>
    </location>
</feature>
<feature type="helix" evidence="8">
    <location>
        <begin position="407"/>
        <end position="409"/>
    </location>
</feature>
<feature type="helix" evidence="8">
    <location>
        <begin position="415"/>
        <end position="427"/>
    </location>
</feature>
<feature type="strand" evidence="8">
    <location>
        <begin position="433"/>
        <end position="436"/>
    </location>
</feature>
<feature type="strand" evidence="8">
    <location>
        <begin position="439"/>
        <end position="447"/>
    </location>
</feature>
<feature type="strand" evidence="8">
    <location>
        <begin position="458"/>
        <end position="465"/>
    </location>
</feature>
<feature type="strand" evidence="8">
    <location>
        <begin position="468"/>
        <end position="473"/>
    </location>
</feature>
<feature type="helix" evidence="8">
    <location>
        <begin position="476"/>
        <end position="478"/>
    </location>
</feature>
<feature type="strand" evidence="8">
    <location>
        <begin position="482"/>
        <end position="485"/>
    </location>
</feature>
<feature type="strand" evidence="8">
    <location>
        <begin position="493"/>
        <end position="495"/>
    </location>
</feature>
<feature type="strand" evidence="8">
    <location>
        <begin position="500"/>
        <end position="506"/>
    </location>
</feature>
<feature type="strand" evidence="8">
    <location>
        <begin position="511"/>
        <end position="516"/>
    </location>
</feature>
<protein>
    <recommendedName>
        <fullName>Alpha-amylase</fullName>
        <ecNumber evidence="3">3.2.1.1</ecNumber>
    </recommendedName>
    <alternativeName>
        <fullName>1,4-alpha-D-glucan glucanohydrolase</fullName>
    </alternativeName>
</protein>
<name>AMY_GEOSE</name>
<reference key="1">
    <citation type="journal article" date="1985" name="J. Bacteriol.">
        <title>Nucleotide sequence of the Bacillus stearothermophilus alpha-amylase gene.</title>
        <authorList>
            <person name="Nakajima R."/>
            <person name="Imanaka T."/>
            <person name="Aiba S."/>
        </authorList>
    </citation>
    <scope>NUCLEOTIDE SEQUENCE [GENOMIC DNA]</scope>
    <scope>PROTEIN SEQUENCE OF 35-39</scope>
</reference>
<reference key="2">
    <citation type="journal article" date="1985" name="J. Biochem.">
        <title>Complete nucleotide sequence of a thermophilic alpha-amylase gene: homology between prokaryotic and eukaryotic alpha-amylases at the active sites.</title>
        <authorList>
            <person name="Ihara H."/>
            <person name="Sasaki T."/>
            <person name="Tsuboi A."/>
            <person name="Yamagata H."/>
            <person name="Tsukagoshi N."/>
            <person name="Udaka S."/>
        </authorList>
    </citation>
    <scope>NUCLEOTIDE SEQUENCE [GENOMIC DNA]</scope>
    <scope>PARTIAL PROTEIN SEQUENCE</scope>
    <source>
        <strain>DY5/PHI300</strain>
    </source>
</reference>
<reference key="3">
    <citation type="journal article" date="1986" name="J. Bacteriol.">
        <title>Structural genes encoding the thermophilic alpha-amylases of Bacillus stearothermophilus and Bacillus licheniformis.</title>
        <authorList>
            <person name="Gray G.L."/>
            <person name="Mainzer S.E."/>
            <person name="Rey M.W."/>
            <person name="Lamsa M.H."/>
            <person name="Kindle K.L."/>
            <person name="Carmona C."/>
            <person name="Requadt C."/>
        </authorList>
    </citation>
    <scope>NUCLEOTIDE SEQUENCE [GENOMIC DNA]</scope>
    <source>
        <strain>NZ-3</strain>
    </source>
</reference>
<reference key="4">
    <citation type="book" date="1987" name="Extracellular enzymes of microorganisms">
        <title>Thermostable alpha amylase of Bacillus stearothermophilus: cloning, expression, and secretion by Escherichia coli.</title>
        <editorList>
            <person name="Chaloupka J."/>
            <person name="Krumphanzl V."/>
        </editorList>
        <authorList>
            <person name="Suominen I."/>
            <person name="Karp M."/>
            <person name="Lautamo J."/>
            <person name="Knowles J."/>
            <person name="Mantsaelae P."/>
        </authorList>
    </citation>
    <scope>NUCLEOTIDE SEQUENCE [GENOMIC DNA]</scope>
    <scope>SUBCELLULAR LOCATION</scope>
</reference>
<reference key="5">
    <citation type="journal article" date="1985" name="J. Bacteriol.">
        <title>Efficient synthesis and secretion of a thermophilic alpha-amylase by protein-producing Bacillus brevis 47 carrying the Bacillus stearothermophilus amylase gene.</title>
        <authorList>
            <person name="Tsukagoshi N."/>
            <person name="Iritani S."/>
            <person name="Sasaki T."/>
            <person name="Takemura T."/>
            <person name="Ihara H."/>
            <person name="Idota Y."/>
            <person name="Yamagata H."/>
            <person name="Udaka S."/>
        </authorList>
    </citation>
    <scope>NUCLEOTIDE SEQUENCE [GENOMIC DNA] OF 1-122</scope>
    <scope>PROTEIN SEQUENCE OF 35-48</scope>
    <scope>SUBCELLULAR LOCATION</scope>
    <scope>CATALYTIC ACTIVITY</scope>
    <source>
        <strain>DY-5</strain>
    </source>
</reference>
<reference key="6">
    <citation type="journal article" date="2001" name="J. Biochem.">
        <title>Crystal structure of Bacillus stearothermophilus alpha-amylase: possible factors determining the thermostability.</title>
        <authorList>
            <person name="Suvd D."/>
            <person name="Fujimoto Z."/>
            <person name="Takase K."/>
            <person name="Matsumura M."/>
            <person name="Mizuno H."/>
        </authorList>
    </citation>
    <scope>X-RAY CRYSTALLOGRAPHY (2.00 ANGSTROMS) OF 35-549 IN COMPLEX WITH SODIUM AND CALCIUM</scope>
    <scope>COFACTOR</scope>
</reference>
<evidence type="ECO:0000250" key="1"/>
<evidence type="ECO:0000269" key="2">
    <source>
    </source>
</evidence>
<evidence type="ECO:0000269" key="3">
    <source>
    </source>
</evidence>
<evidence type="ECO:0000269" key="4">
    <source>
    </source>
</evidence>
<evidence type="ECO:0000269" key="5">
    <source ref="4"/>
</evidence>
<evidence type="ECO:0000305" key="6"/>
<evidence type="ECO:0007744" key="7">
    <source>
        <dbReference type="PDB" id="1HVX"/>
    </source>
</evidence>
<evidence type="ECO:0007829" key="8">
    <source>
        <dbReference type="PDB" id="4UZU"/>
    </source>
</evidence>